<reference key="1">
    <citation type="journal article" date="2016" name="Stand. Genomic Sci.">
        <title>Complete genome sequence of the Antarctic Halorubrum lacusprofundi type strain ACAM 34.</title>
        <authorList>
            <person name="Anderson I.J."/>
            <person name="DasSarma P."/>
            <person name="Lucas S."/>
            <person name="Copeland A."/>
            <person name="Lapidus A."/>
            <person name="Del Rio T.G."/>
            <person name="Tice H."/>
            <person name="Dalin E."/>
            <person name="Bruce D.C."/>
            <person name="Goodwin L."/>
            <person name="Pitluck S."/>
            <person name="Sims D."/>
            <person name="Brettin T.S."/>
            <person name="Detter J.C."/>
            <person name="Han C.S."/>
            <person name="Larimer F."/>
            <person name="Hauser L."/>
            <person name="Land M."/>
            <person name="Ivanova N."/>
            <person name="Richardson P."/>
            <person name="Cavicchioli R."/>
            <person name="DasSarma S."/>
            <person name="Woese C.R."/>
            <person name="Kyrpides N.C."/>
        </authorList>
    </citation>
    <scope>NUCLEOTIDE SEQUENCE [LARGE SCALE GENOMIC DNA]</scope>
    <source>
        <strain>ATCC 49239 / DSM 5036 / JCM 8891 / ACAM 34</strain>
    </source>
</reference>
<evidence type="ECO:0000255" key="1">
    <source>
        <dbReference type="HAMAP-Rule" id="MF_02115"/>
    </source>
</evidence>
<protein>
    <recommendedName>
        <fullName evidence="1">FAD synthase</fullName>
        <ecNumber evidence="1">2.7.7.2</ecNumber>
    </recommendedName>
    <alternativeName>
        <fullName evidence="1">FMN adenylyltransferase</fullName>
    </alternativeName>
    <alternativeName>
        <fullName evidence="1">Flavin adenine dinucleotide synthase</fullName>
    </alternativeName>
</protein>
<gene>
    <name evidence="1" type="primary">ribL</name>
    <name type="ordered locus">Hlac_2406</name>
</gene>
<accession>B9LSN4</accession>
<proteinExistence type="inferred from homology"/>
<keyword id="KW-0067">ATP-binding</keyword>
<keyword id="KW-0274">FAD</keyword>
<keyword id="KW-0285">Flavoprotein</keyword>
<keyword id="KW-0288">FMN</keyword>
<keyword id="KW-0547">Nucleotide-binding</keyword>
<keyword id="KW-0548">Nucleotidyltransferase</keyword>
<keyword id="KW-1185">Reference proteome</keyword>
<keyword id="KW-0808">Transferase</keyword>
<sequence length="153" mass="16936">MTRVVAQGTFDLLHPGHVHYLEDAATYGDELHAIVARRTNVTHKPAPILCAEQRRDMVAALTAVDEAHLGHPEDVFVPIQRLDPDVIVLGFDQHHDEADIAAALAERGIDCRVERASGRDPRYEDELLSSGDIVDRILKQRGSDCDGAREGQR</sequence>
<dbReference type="EC" id="2.7.7.2" evidence="1"/>
<dbReference type="EMBL" id="CP001365">
    <property type="protein sequence ID" value="ACM57981.1"/>
    <property type="molecule type" value="Genomic_DNA"/>
</dbReference>
<dbReference type="RefSeq" id="WP_015911100.1">
    <property type="nucleotide sequence ID" value="NC_012029.1"/>
</dbReference>
<dbReference type="SMR" id="B9LSN4"/>
<dbReference type="GeneID" id="7400524"/>
<dbReference type="KEGG" id="hla:Hlac_2406"/>
<dbReference type="eggNOG" id="arCOG01222">
    <property type="taxonomic scope" value="Archaea"/>
</dbReference>
<dbReference type="HOGENOM" id="CLU_034585_2_1_2"/>
<dbReference type="UniPathway" id="UPA00277">
    <property type="reaction ID" value="UER00407"/>
</dbReference>
<dbReference type="Proteomes" id="UP000000740">
    <property type="component" value="Chromosome 1"/>
</dbReference>
<dbReference type="GO" id="GO:0005524">
    <property type="term" value="F:ATP binding"/>
    <property type="evidence" value="ECO:0007669"/>
    <property type="project" value="UniProtKB-UniRule"/>
</dbReference>
<dbReference type="GO" id="GO:0003919">
    <property type="term" value="F:FMN adenylyltransferase activity"/>
    <property type="evidence" value="ECO:0007669"/>
    <property type="project" value="UniProtKB-UniRule"/>
</dbReference>
<dbReference type="GO" id="GO:0006747">
    <property type="term" value="P:FAD biosynthetic process"/>
    <property type="evidence" value="ECO:0007669"/>
    <property type="project" value="UniProtKB-UniRule"/>
</dbReference>
<dbReference type="GO" id="GO:0046444">
    <property type="term" value="P:FMN metabolic process"/>
    <property type="evidence" value="ECO:0007669"/>
    <property type="project" value="UniProtKB-UniRule"/>
</dbReference>
<dbReference type="CDD" id="cd02170">
    <property type="entry name" value="cytidylyltransferase"/>
    <property type="match status" value="1"/>
</dbReference>
<dbReference type="Gene3D" id="3.40.50.620">
    <property type="entry name" value="HUPs"/>
    <property type="match status" value="1"/>
</dbReference>
<dbReference type="HAMAP" id="MF_02115">
    <property type="entry name" value="FAD_synth_arch"/>
    <property type="match status" value="1"/>
</dbReference>
<dbReference type="InterPro" id="IPR050385">
    <property type="entry name" value="Archaeal_FAD_synthase"/>
</dbReference>
<dbReference type="InterPro" id="IPR004821">
    <property type="entry name" value="Cyt_trans-like"/>
</dbReference>
<dbReference type="InterPro" id="IPR024902">
    <property type="entry name" value="FAD_synth_RibL"/>
</dbReference>
<dbReference type="InterPro" id="IPR014729">
    <property type="entry name" value="Rossmann-like_a/b/a_fold"/>
</dbReference>
<dbReference type="NCBIfam" id="TIGR00125">
    <property type="entry name" value="cyt_tran_rel"/>
    <property type="match status" value="1"/>
</dbReference>
<dbReference type="PANTHER" id="PTHR43793">
    <property type="entry name" value="FAD SYNTHASE"/>
    <property type="match status" value="1"/>
</dbReference>
<dbReference type="PANTHER" id="PTHR43793:SF1">
    <property type="entry name" value="FAD SYNTHASE"/>
    <property type="match status" value="1"/>
</dbReference>
<dbReference type="Pfam" id="PF01467">
    <property type="entry name" value="CTP_transf_like"/>
    <property type="match status" value="1"/>
</dbReference>
<dbReference type="SUPFAM" id="SSF52374">
    <property type="entry name" value="Nucleotidylyl transferase"/>
    <property type="match status" value="1"/>
</dbReference>
<comment type="function">
    <text evidence="1">Catalyzes the transfer of the AMP portion of ATP to flavin mononucleotide (FMN) to produce flavin adenine dinucleotide (FAD) coenzyme.</text>
</comment>
<comment type="catalytic activity">
    <reaction evidence="1">
        <text>FMN + ATP + H(+) = FAD + diphosphate</text>
        <dbReference type="Rhea" id="RHEA:17237"/>
        <dbReference type="ChEBI" id="CHEBI:15378"/>
        <dbReference type="ChEBI" id="CHEBI:30616"/>
        <dbReference type="ChEBI" id="CHEBI:33019"/>
        <dbReference type="ChEBI" id="CHEBI:57692"/>
        <dbReference type="ChEBI" id="CHEBI:58210"/>
        <dbReference type="EC" id="2.7.7.2"/>
    </reaction>
</comment>
<comment type="cofactor">
    <cofactor evidence="1">
        <name>a divalent metal cation</name>
        <dbReference type="ChEBI" id="CHEBI:60240"/>
    </cofactor>
</comment>
<comment type="pathway">
    <text evidence="1">Cofactor biosynthesis; FAD biosynthesis; FAD from FMN: step 1/1.</text>
</comment>
<comment type="subunit">
    <text evidence="1">Homodimer.</text>
</comment>
<comment type="similarity">
    <text evidence="1">Belongs to the archaeal FAD synthase family.</text>
</comment>
<feature type="chain" id="PRO_0000406241" description="FAD synthase">
    <location>
        <begin position="1"/>
        <end position="153"/>
    </location>
</feature>
<feature type="binding site" evidence="1">
    <location>
        <begin position="9"/>
        <end position="10"/>
    </location>
    <ligand>
        <name>ATP</name>
        <dbReference type="ChEBI" id="CHEBI:30616"/>
    </ligand>
</feature>
<feature type="binding site" evidence="1">
    <location>
        <begin position="14"/>
        <end position="17"/>
    </location>
    <ligand>
        <name>ATP</name>
        <dbReference type="ChEBI" id="CHEBI:30616"/>
    </ligand>
</feature>
<feature type="binding site" evidence="1">
    <location>
        <position position="92"/>
    </location>
    <ligand>
        <name>ATP</name>
        <dbReference type="ChEBI" id="CHEBI:30616"/>
    </ligand>
</feature>
<organism>
    <name type="scientific">Halorubrum lacusprofundi (strain ATCC 49239 / DSM 5036 / JCM 8891 / ACAM 34)</name>
    <dbReference type="NCBI Taxonomy" id="416348"/>
    <lineage>
        <taxon>Archaea</taxon>
        <taxon>Methanobacteriati</taxon>
        <taxon>Methanobacteriota</taxon>
        <taxon>Stenosarchaea group</taxon>
        <taxon>Halobacteria</taxon>
        <taxon>Halobacteriales</taxon>
        <taxon>Haloferacaceae</taxon>
        <taxon>Halorubrum</taxon>
    </lineage>
</organism>
<name>RIBL_HALLT</name>